<gene>
    <name evidence="1" type="primary">ycaR</name>
    <name type="ordered locus">SeD_A1052</name>
</gene>
<feature type="chain" id="PRO_1000138328" description="UPF0434 protein YcaR">
    <location>
        <begin position="1"/>
        <end position="60"/>
    </location>
</feature>
<protein>
    <recommendedName>
        <fullName evidence="1">UPF0434 protein YcaR</fullName>
    </recommendedName>
</protein>
<evidence type="ECO:0000255" key="1">
    <source>
        <dbReference type="HAMAP-Rule" id="MF_01187"/>
    </source>
</evidence>
<proteinExistence type="inferred from homology"/>
<name>YCAR_SALDC</name>
<accession>B5FQ60</accession>
<comment type="similarity">
    <text evidence="1">Belongs to the UPF0434 family.</text>
</comment>
<organism>
    <name type="scientific">Salmonella dublin (strain CT_02021853)</name>
    <dbReference type="NCBI Taxonomy" id="439851"/>
    <lineage>
        <taxon>Bacteria</taxon>
        <taxon>Pseudomonadati</taxon>
        <taxon>Pseudomonadota</taxon>
        <taxon>Gammaproteobacteria</taxon>
        <taxon>Enterobacterales</taxon>
        <taxon>Enterobacteriaceae</taxon>
        <taxon>Salmonella</taxon>
    </lineage>
</organism>
<sequence length="60" mass="6856">MDHRLLEIIACPVCNGKLWYNQEQQELICKLDNLAFPLRDGIPVLLENEARALTSDESKS</sequence>
<dbReference type="EMBL" id="CP001144">
    <property type="protein sequence ID" value="ACH76078.1"/>
    <property type="molecule type" value="Genomic_DNA"/>
</dbReference>
<dbReference type="RefSeq" id="WP_000350061.1">
    <property type="nucleotide sequence ID" value="NC_011205.1"/>
</dbReference>
<dbReference type="SMR" id="B5FQ60"/>
<dbReference type="KEGG" id="sed:SeD_A1052"/>
<dbReference type="HOGENOM" id="CLU_155659_3_1_6"/>
<dbReference type="Proteomes" id="UP000008322">
    <property type="component" value="Chromosome"/>
</dbReference>
<dbReference type="GO" id="GO:0005829">
    <property type="term" value="C:cytosol"/>
    <property type="evidence" value="ECO:0007669"/>
    <property type="project" value="TreeGrafter"/>
</dbReference>
<dbReference type="FunFam" id="2.20.25.10:FF:000002">
    <property type="entry name" value="UPF0434 protein YcaR"/>
    <property type="match status" value="1"/>
</dbReference>
<dbReference type="Gene3D" id="2.20.25.10">
    <property type="match status" value="1"/>
</dbReference>
<dbReference type="HAMAP" id="MF_01187">
    <property type="entry name" value="UPF0434"/>
    <property type="match status" value="1"/>
</dbReference>
<dbReference type="InterPro" id="IPR005651">
    <property type="entry name" value="Trm112-like"/>
</dbReference>
<dbReference type="NCBIfam" id="NF008806">
    <property type="entry name" value="PRK11827.1"/>
    <property type="match status" value="1"/>
</dbReference>
<dbReference type="PANTHER" id="PTHR33505:SF4">
    <property type="entry name" value="PROTEIN PREY, MITOCHONDRIAL"/>
    <property type="match status" value="1"/>
</dbReference>
<dbReference type="PANTHER" id="PTHR33505">
    <property type="entry name" value="ZGC:162634"/>
    <property type="match status" value="1"/>
</dbReference>
<dbReference type="Pfam" id="PF03966">
    <property type="entry name" value="Trm112p"/>
    <property type="match status" value="1"/>
</dbReference>
<dbReference type="SUPFAM" id="SSF158997">
    <property type="entry name" value="Trm112p-like"/>
    <property type="match status" value="1"/>
</dbReference>
<reference key="1">
    <citation type="journal article" date="2011" name="J. Bacteriol.">
        <title>Comparative genomics of 28 Salmonella enterica isolates: evidence for CRISPR-mediated adaptive sublineage evolution.</title>
        <authorList>
            <person name="Fricke W.F."/>
            <person name="Mammel M.K."/>
            <person name="McDermott P.F."/>
            <person name="Tartera C."/>
            <person name="White D.G."/>
            <person name="Leclerc J.E."/>
            <person name="Ravel J."/>
            <person name="Cebula T.A."/>
        </authorList>
    </citation>
    <scope>NUCLEOTIDE SEQUENCE [LARGE SCALE GENOMIC DNA]</scope>
    <source>
        <strain>CT_02021853</strain>
    </source>
</reference>